<accession>P22806</accession>
<keyword id="KW-0093">Biotin biosynthesis</keyword>
<keyword id="KW-0903">Direct protein sequencing</keyword>
<keyword id="KW-0663">Pyridoxal phosphate</keyword>
<keyword id="KW-0808">Transferase</keyword>
<feature type="chain" id="PRO_0000163808" description="8-amino-7-oxononanoate synthase">
    <location>
        <begin position="1"/>
        <end position="389"/>
    </location>
</feature>
<feature type="binding site" evidence="1">
    <location>
        <position position="19"/>
    </location>
    <ligand>
        <name>substrate</name>
    </ligand>
</feature>
<feature type="binding site" evidence="1">
    <location>
        <begin position="106"/>
        <end position="107"/>
    </location>
    <ligand>
        <name>pyridoxal 5'-phosphate</name>
        <dbReference type="ChEBI" id="CHEBI:597326"/>
    </ligand>
</feature>
<feature type="binding site" evidence="1">
    <location>
        <position position="131"/>
    </location>
    <ligand>
        <name>substrate</name>
    </ligand>
</feature>
<feature type="binding site" evidence="1">
    <location>
        <position position="178"/>
    </location>
    <ligand>
        <name>pyridoxal 5'-phosphate</name>
        <dbReference type="ChEBI" id="CHEBI:597326"/>
    </ligand>
</feature>
<feature type="binding site" evidence="1">
    <location>
        <begin position="203"/>
        <end position="206"/>
    </location>
    <ligand>
        <name>pyridoxal 5'-phosphate</name>
        <dbReference type="ChEBI" id="CHEBI:597326"/>
    </ligand>
</feature>
<feature type="binding site" evidence="1">
    <location>
        <begin position="234"/>
        <end position="237"/>
    </location>
    <ligand>
        <name>pyridoxal 5'-phosphate</name>
        <dbReference type="ChEBI" id="CHEBI:597326"/>
    </ligand>
</feature>
<feature type="binding site" evidence="1">
    <location>
        <position position="351"/>
    </location>
    <ligand>
        <name>substrate</name>
    </ligand>
</feature>
<feature type="modified residue" description="N6-(pyridoxal phosphate)lysine" evidence="1">
    <location>
        <position position="237"/>
    </location>
</feature>
<comment type="function">
    <text evidence="1 2 3">Catalyzes the decarboxylative condensation of pimeloyl-[acyl-carrier protein] and L-alanine to produce 8-amino-7-oxononanoate (AON), [acyl-carrier protein], and carbon dioxide (By similarity). Can also use pimeloyl-CoA instead of pimeloyl-ACP as substrate.</text>
</comment>
<comment type="catalytic activity">
    <reaction>
        <text>6-carboxyhexanoyl-[ACP] + L-alanine + H(+) = (8S)-8-amino-7-oxononanoate + holo-[ACP] + CO2</text>
        <dbReference type="Rhea" id="RHEA:42288"/>
        <dbReference type="Rhea" id="RHEA-COMP:9685"/>
        <dbReference type="Rhea" id="RHEA-COMP:9955"/>
        <dbReference type="ChEBI" id="CHEBI:15378"/>
        <dbReference type="ChEBI" id="CHEBI:16526"/>
        <dbReference type="ChEBI" id="CHEBI:57972"/>
        <dbReference type="ChEBI" id="CHEBI:64479"/>
        <dbReference type="ChEBI" id="CHEBI:78846"/>
        <dbReference type="ChEBI" id="CHEBI:149468"/>
        <dbReference type="EC" id="2.3.1.47"/>
    </reaction>
</comment>
<comment type="cofactor">
    <cofactor evidence="2">
        <name>pyridoxal 5'-phosphate</name>
        <dbReference type="ChEBI" id="CHEBI:597326"/>
    </cofactor>
</comment>
<comment type="biophysicochemical properties">
    <kinetics>
        <KM evidence="2">1 uM for pimeloyl-CoA (at pH 7.0 and at 37 degrees Celsius)</KM>
        <KM evidence="2">3 mM for L-alanine (at pH 7.0 and at 37 degrees Celsius)</KM>
    </kinetics>
</comment>
<comment type="pathway">
    <text>Cofactor biosynthesis; biotin biosynthesis.</text>
</comment>
<comment type="subunit">
    <text evidence="2">Homodimer.</text>
</comment>
<comment type="similarity">
    <text evidence="4">Belongs to the class-II pyridoxal-phosphate-dependent aminotransferase family. BioF subfamily.</text>
</comment>
<name>BIOF_LYSSH</name>
<proteinExistence type="evidence at protein level"/>
<dbReference type="EC" id="2.3.1.47"/>
<dbReference type="EMBL" id="M29291">
    <property type="protein sequence ID" value="AAA22271.1"/>
    <property type="molecule type" value="Genomic_DNA"/>
</dbReference>
<dbReference type="PIR" id="JQ0512">
    <property type="entry name" value="JQ0512"/>
</dbReference>
<dbReference type="RefSeq" id="WP_024362857.1">
    <property type="nucleotide sequence ID" value="NZ_UFSZ01000001.1"/>
</dbReference>
<dbReference type="SMR" id="P22806"/>
<dbReference type="GeneID" id="48278542"/>
<dbReference type="BioCyc" id="MetaCyc:MONOMER-14018"/>
<dbReference type="SABIO-RK" id="P22806"/>
<dbReference type="UniPathway" id="UPA00078"/>
<dbReference type="GO" id="GO:0008710">
    <property type="term" value="F:8-amino-7-oxononanoate synthase activity"/>
    <property type="evidence" value="ECO:0007669"/>
    <property type="project" value="UniProtKB-EC"/>
</dbReference>
<dbReference type="GO" id="GO:0030170">
    <property type="term" value="F:pyridoxal phosphate binding"/>
    <property type="evidence" value="ECO:0007669"/>
    <property type="project" value="InterPro"/>
</dbReference>
<dbReference type="GO" id="GO:0009102">
    <property type="term" value="P:biotin biosynthetic process"/>
    <property type="evidence" value="ECO:0007669"/>
    <property type="project" value="UniProtKB-UniPathway"/>
</dbReference>
<dbReference type="CDD" id="cd06454">
    <property type="entry name" value="KBL_like"/>
    <property type="match status" value="1"/>
</dbReference>
<dbReference type="FunFam" id="3.40.640.10:FF:000006">
    <property type="entry name" value="5-aminolevulinate synthase, mitochondrial"/>
    <property type="match status" value="1"/>
</dbReference>
<dbReference type="Gene3D" id="3.90.1150.10">
    <property type="entry name" value="Aspartate Aminotransferase, domain 1"/>
    <property type="match status" value="1"/>
</dbReference>
<dbReference type="Gene3D" id="3.40.640.10">
    <property type="entry name" value="Type I PLP-dependent aspartate aminotransferase-like (Major domain)"/>
    <property type="match status" value="1"/>
</dbReference>
<dbReference type="InterPro" id="IPR001917">
    <property type="entry name" value="Aminotrans_II_pyridoxalP_BS"/>
</dbReference>
<dbReference type="InterPro" id="IPR004839">
    <property type="entry name" value="Aminotransferase_I/II_large"/>
</dbReference>
<dbReference type="InterPro" id="IPR050087">
    <property type="entry name" value="AON_synthase_class-II"/>
</dbReference>
<dbReference type="InterPro" id="IPR004723">
    <property type="entry name" value="AONS_Archaea/Proteobacteria"/>
</dbReference>
<dbReference type="InterPro" id="IPR015424">
    <property type="entry name" value="PyrdxlP-dep_Trfase"/>
</dbReference>
<dbReference type="InterPro" id="IPR015421">
    <property type="entry name" value="PyrdxlP-dep_Trfase_major"/>
</dbReference>
<dbReference type="InterPro" id="IPR015422">
    <property type="entry name" value="PyrdxlP-dep_Trfase_small"/>
</dbReference>
<dbReference type="NCBIfam" id="TIGR00858">
    <property type="entry name" value="bioF"/>
    <property type="match status" value="1"/>
</dbReference>
<dbReference type="PANTHER" id="PTHR13693">
    <property type="entry name" value="CLASS II AMINOTRANSFERASE/8-AMINO-7-OXONONANOATE SYNTHASE"/>
    <property type="match status" value="1"/>
</dbReference>
<dbReference type="PANTHER" id="PTHR13693:SF3">
    <property type="entry name" value="LD36009P"/>
    <property type="match status" value="1"/>
</dbReference>
<dbReference type="Pfam" id="PF00155">
    <property type="entry name" value="Aminotran_1_2"/>
    <property type="match status" value="1"/>
</dbReference>
<dbReference type="SUPFAM" id="SSF53383">
    <property type="entry name" value="PLP-dependent transferases"/>
    <property type="match status" value="1"/>
</dbReference>
<dbReference type="PROSITE" id="PS00599">
    <property type="entry name" value="AA_TRANSFER_CLASS_2"/>
    <property type="match status" value="1"/>
</dbReference>
<reference key="1">
    <citation type="journal article" date="1990" name="Gene">
        <title>Cloning and characterization of the Bacillus sphaericus genes controlling the bioconversion of pimelate into dethiobiotin.</title>
        <authorList>
            <person name="Gloeckler R."/>
            <person name="Ohsawa I."/>
            <person name="Speck D."/>
            <person name="Ledoux C."/>
            <person name="Bernard S."/>
            <person name="Zinsius M."/>
            <person name="Villeval D."/>
            <person name="Kisou T."/>
            <person name="Kamogawa K."/>
            <person name="Lemoine Y."/>
        </authorList>
    </citation>
    <scope>NUCLEOTIDE SEQUENCE [GENOMIC DNA]</scope>
    <source>
        <strain>ATCC 10208 / DSM 5019 / NBRC 3525 / NCIMB 11935 / NRS 966 / 1911</strain>
    </source>
</reference>
<reference key="2">
    <citation type="journal article" date="1992" name="Biochem. J.">
        <title>The 8-amino-7-oxopelargonate synthase from Bacillus sphaericus. Purification and preliminary characterization of the cloned enzyme overproduced in Escherichia coli.</title>
        <authorList>
            <person name="Ploux O."/>
            <person name="Marquet A."/>
        </authorList>
    </citation>
    <scope>PROTEIN SEQUENCE OF 1-14</scope>
    <scope>FUNCTION AS A 8-AMINO-7-OXONONANOATE SYNTHASE</scope>
    <scope>BIOPHYSICOCHEMICAL PROPERTIES</scope>
    <scope>COFACTOR</scope>
    <scope>SUBUNIT</scope>
</reference>
<reference key="3">
    <citation type="journal article" date="1996" name="Eur. J. Biochem.">
        <title>Mechanistic studies on the 8-amino-7-oxopelargonate synthase, a pyridoxal-5'-phosphate-dependent enzyme involved in biotin biosynthesis.</title>
        <authorList>
            <person name="Ploux O."/>
            <person name="Marquet A."/>
        </authorList>
    </citation>
    <scope>FUNCTION</scope>
    <scope>REACTION MECHANISM</scope>
</reference>
<reference key="4">
    <citation type="journal article" date="1996" name="Acta Crystallogr. D">
        <title>Crystallization and preliminary X-ray study of the 8-amino-7-oxopelargonate synthase from Bacillus sphaericus.</title>
        <authorList>
            <person name="Spinelli S."/>
            <person name="Ploux O."/>
            <person name="Marquet A."/>
            <person name="Anguille C."/>
            <person name="Jelsch C."/>
            <person name="Cambillau C."/>
            <person name="Martinez C."/>
        </authorList>
    </citation>
    <scope>CRYSTALLIZATION</scope>
</reference>
<protein>
    <recommendedName>
        <fullName>8-amino-7-oxononanoate synthase</fullName>
        <shortName>AONS</shortName>
        <ecNumber>2.3.1.47</ecNumber>
    </recommendedName>
    <alternativeName>
        <fullName>7-keto-8-amino-pelargonic acid synthase</fullName>
        <shortName>7-KAP synthase</shortName>
    </alternativeName>
    <alternativeName>
        <fullName>8-amino-7-ketopelargonate synthase</fullName>
    </alternativeName>
</protein>
<evidence type="ECO:0000250" key="1"/>
<evidence type="ECO:0000269" key="2">
    <source>
    </source>
</evidence>
<evidence type="ECO:0000269" key="3">
    <source>
    </source>
</evidence>
<evidence type="ECO:0000305" key="4"/>
<sequence>MNDRFRRELQVIEEQGLTRKLRLFSTGNESEVVMNGKKFLLFSSNNYLGLATDSRLKKKATEGISKYGTGAGGSRLTTGNFDIHEQLESEIADFKKTEAAIVFSSGYLANVGVISSVMKAGDTIFSDAWNHASIIDGCRLSKAKTIVYEHADMVDLERKLRQSHGDGLKFIVTDGVFSMDGDIAPLPKIVELAKEYKAYIMIDDAHATGVLGNDGCGTADYFGLKDEIDFTVGTLSKAIGAEGGFVSTSSIAKNYLLNNARSFIFQTALSPSAIEAAREGISIIQNEPERRKQLLKNAQYLRLKLEESGFVMKEGETPIISLIIGGSHEAMQFSAKLLDEGVFIPAIRPPTVPKGSSRLRITVMATHTIEQLDMVISKIKKIGKEMGIV</sequence>
<gene>
    <name type="primary">bioF</name>
</gene>
<organism>
    <name type="scientific">Lysinibacillus sphaericus</name>
    <name type="common">Bacillus sphaericus</name>
    <dbReference type="NCBI Taxonomy" id="1421"/>
    <lineage>
        <taxon>Bacteria</taxon>
        <taxon>Bacillati</taxon>
        <taxon>Bacillota</taxon>
        <taxon>Bacilli</taxon>
        <taxon>Bacillales</taxon>
        <taxon>Bacillaceae</taxon>
        <taxon>Lysinibacillus</taxon>
    </lineage>
</organism>